<proteinExistence type="inferred from homology"/>
<name>RRF_BEII9</name>
<organism>
    <name type="scientific">Beijerinckia indica subsp. indica (strain ATCC 9039 / DSM 1715 / NCIMB 8712)</name>
    <dbReference type="NCBI Taxonomy" id="395963"/>
    <lineage>
        <taxon>Bacteria</taxon>
        <taxon>Pseudomonadati</taxon>
        <taxon>Pseudomonadota</taxon>
        <taxon>Alphaproteobacteria</taxon>
        <taxon>Hyphomicrobiales</taxon>
        <taxon>Beijerinckiaceae</taxon>
        <taxon>Beijerinckia</taxon>
    </lineage>
</organism>
<sequence length="186" mass="20642">MSAEFDISDLKRRMQGAIATLKHELGGLRTGRATASLLEPVHVDAYGQSLPLNQVATISVAEARMLSVQVWDKGMVGPVDKAIRDSNLGLSPTVEGQILRIRIPELNEQRRKEMAKVAHKYAEEAKVAVRHVRRDGIDTLKKLLKDKAIGEDDEKRHAAEIQKVTDQFVGEVDQALAAKEKEIMQV</sequence>
<gene>
    <name evidence="1" type="primary">frr</name>
    <name type="ordered locus">Bind_0300</name>
</gene>
<dbReference type="EMBL" id="CP001016">
    <property type="protein sequence ID" value="ACB93954.1"/>
    <property type="molecule type" value="Genomic_DNA"/>
</dbReference>
<dbReference type="RefSeq" id="WP_012383312.1">
    <property type="nucleotide sequence ID" value="NC_010581.1"/>
</dbReference>
<dbReference type="SMR" id="B2ID97"/>
<dbReference type="STRING" id="395963.Bind_0300"/>
<dbReference type="KEGG" id="bid:Bind_0300"/>
<dbReference type="eggNOG" id="COG0233">
    <property type="taxonomic scope" value="Bacteria"/>
</dbReference>
<dbReference type="HOGENOM" id="CLU_073981_2_0_5"/>
<dbReference type="OrthoDB" id="9804006at2"/>
<dbReference type="Proteomes" id="UP000001695">
    <property type="component" value="Chromosome"/>
</dbReference>
<dbReference type="GO" id="GO:0005829">
    <property type="term" value="C:cytosol"/>
    <property type="evidence" value="ECO:0007669"/>
    <property type="project" value="GOC"/>
</dbReference>
<dbReference type="GO" id="GO:0043023">
    <property type="term" value="F:ribosomal large subunit binding"/>
    <property type="evidence" value="ECO:0007669"/>
    <property type="project" value="TreeGrafter"/>
</dbReference>
<dbReference type="GO" id="GO:0002184">
    <property type="term" value="P:cytoplasmic translational termination"/>
    <property type="evidence" value="ECO:0007669"/>
    <property type="project" value="TreeGrafter"/>
</dbReference>
<dbReference type="CDD" id="cd00520">
    <property type="entry name" value="RRF"/>
    <property type="match status" value="1"/>
</dbReference>
<dbReference type="FunFam" id="1.10.132.20:FF:000001">
    <property type="entry name" value="Ribosome-recycling factor"/>
    <property type="match status" value="1"/>
</dbReference>
<dbReference type="FunFam" id="3.30.1360.40:FF:000001">
    <property type="entry name" value="Ribosome-recycling factor"/>
    <property type="match status" value="1"/>
</dbReference>
<dbReference type="Gene3D" id="3.30.1360.40">
    <property type="match status" value="1"/>
</dbReference>
<dbReference type="Gene3D" id="1.10.132.20">
    <property type="entry name" value="Ribosome-recycling factor"/>
    <property type="match status" value="1"/>
</dbReference>
<dbReference type="HAMAP" id="MF_00040">
    <property type="entry name" value="RRF"/>
    <property type="match status" value="1"/>
</dbReference>
<dbReference type="InterPro" id="IPR002661">
    <property type="entry name" value="Ribosome_recyc_fac"/>
</dbReference>
<dbReference type="InterPro" id="IPR023584">
    <property type="entry name" value="Ribosome_recyc_fac_dom"/>
</dbReference>
<dbReference type="InterPro" id="IPR036191">
    <property type="entry name" value="RRF_sf"/>
</dbReference>
<dbReference type="NCBIfam" id="TIGR00496">
    <property type="entry name" value="frr"/>
    <property type="match status" value="1"/>
</dbReference>
<dbReference type="PANTHER" id="PTHR20982:SF3">
    <property type="entry name" value="MITOCHONDRIAL RIBOSOME RECYCLING FACTOR PSEUDO 1"/>
    <property type="match status" value="1"/>
</dbReference>
<dbReference type="PANTHER" id="PTHR20982">
    <property type="entry name" value="RIBOSOME RECYCLING FACTOR"/>
    <property type="match status" value="1"/>
</dbReference>
<dbReference type="Pfam" id="PF01765">
    <property type="entry name" value="RRF"/>
    <property type="match status" value="1"/>
</dbReference>
<dbReference type="SUPFAM" id="SSF55194">
    <property type="entry name" value="Ribosome recycling factor, RRF"/>
    <property type="match status" value="1"/>
</dbReference>
<evidence type="ECO:0000255" key="1">
    <source>
        <dbReference type="HAMAP-Rule" id="MF_00040"/>
    </source>
</evidence>
<protein>
    <recommendedName>
        <fullName evidence="1">Ribosome-recycling factor</fullName>
        <shortName evidence="1">RRF</shortName>
    </recommendedName>
    <alternativeName>
        <fullName evidence="1">Ribosome-releasing factor</fullName>
    </alternativeName>
</protein>
<comment type="function">
    <text evidence="1">Responsible for the release of ribosomes from messenger RNA at the termination of protein biosynthesis. May increase the efficiency of translation by recycling ribosomes from one round of translation to another.</text>
</comment>
<comment type="subcellular location">
    <subcellularLocation>
        <location evidence="1">Cytoplasm</location>
    </subcellularLocation>
</comment>
<comment type="similarity">
    <text evidence="1">Belongs to the RRF family.</text>
</comment>
<keyword id="KW-0963">Cytoplasm</keyword>
<keyword id="KW-0648">Protein biosynthesis</keyword>
<keyword id="KW-1185">Reference proteome</keyword>
<feature type="chain" id="PRO_1000090708" description="Ribosome-recycling factor">
    <location>
        <begin position="1"/>
        <end position="186"/>
    </location>
</feature>
<accession>B2ID97</accession>
<reference key="1">
    <citation type="journal article" date="2010" name="J. Bacteriol.">
        <title>Complete genome sequence of Beijerinckia indica subsp. indica.</title>
        <authorList>
            <person name="Tamas I."/>
            <person name="Dedysh S.N."/>
            <person name="Liesack W."/>
            <person name="Stott M.B."/>
            <person name="Alam M."/>
            <person name="Murrell J.C."/>
            <person name="Dunfield P.F."/>
        </authorList>
    </citation>
    <scope>NUCLEOTIDE SEQUENCE [LARGE SCALE GENOMIC DNA]</scope>
    <source>
        <strain>ATCC 9039 / DSM 1715 / NCIMB 8712</strain>
    </source>
</reference>